<reference key="1">
    <citation type="journal article" date="2004" name="Mol. Biol. Evol.">
        <title>Human-specific amino acid changes found in 103 protein-coding genes.</title>
        <authorList>
            <person name="Kitano T."/>
            <person name="Liu Y.-H."/>
            <person name="Ueda S."/>
            <person name="Saitou N."/>
        </authorList>
    </citation>
    <scope>NUCLEOTIDE SEQUENCE [GENOMIC DNA]</scope>
    <source>
        <strain>Isolate oran-Po17</strain>
    </source>
</reference>
<feature type="chain" id="PRO_0000219149" description="Beta-1,3-galactosyltransferase 1">
    <location>
        <begin position="1"/>
        <end position="326"/>
    </location>
</feature>
<feature type="topological domain" description="Cytoplasmic" evidence="3">
    <location>
        <begin position="1"/>
        <end position="6"/>
    </location>
</feature>
<feature type="transmembrane region" description="Helical; Signal-anchor for type II membrane protein" evidence="3">
    <location>
        <begin position="7"/>
        <end position="26"/>
    </location>
</feature>
<feature type="topological domain" description="Lumenal" evidence="3">
    <location>
        <begin position="27"/>
        <end position="326"/>
    </location>
</feature>
<feature type="glycosylation site" description="N-linked (GlcNAc...) asparagine" evidence="3">
    <location>
        <position position="47"/>
    </location>
</feature>
<feature type="glycosylation site" description="N-linked (GlcNAc...) asparagine" evidence="3">
    <location>
        <position position="151"/>
    </location>
</feature>
<comment type="function">
    <text evidence="2">Beta-1,3-galactosyltransferase that transfers galactose from UDP-galactose to substrates with a terminal beta-N-acetylglucosamine (beta-GlcNAc) residue. Involved in the biosynthesis of the carbohydrate moieties of glycolipids and glycoproteins.</text>
</comment>
<comment type="catalytic activity">
    <reaction evidence="2">
        <text>an N-acetyl-beta-D-glucosaminyl derivative + UDP-alpha-D-galactose = a beta-D-galactosyl-(1-&gt;3)-N-acetyl-beta-D-glucosaminyl derivative + UDP + H(+)</text>
        <dbReference type="Rhea" id="RHEA:53432"/>
        <dbReference type="ChEBI" id="CHEBI:15378"/>
        <dbReference type="ChEBI" id="CHEBI:58223"/>
        <dbReference type="ChEBI" id="CHEBI:61631"/>
        <dbReference type="ChEBI" id="CHEBI:66914"/>
        <dbReference type="ChEBI" id="CHEBI:133506"/>
        <dbReference type="EC" id="2.4.1.86"/>
    </reaction>
    <physiologicalReaction direction="left-to-right" evidence="2">
        <dbReference type="Rhea" id="RHEA:53433"/>
    </physiologicalReaction>
</comment>
<comment type="catalytic activity">
    <reaction evidence="2">
        <text>a beta-D-GlcNAc-(1-&gt;3)-beta-D-Gal-(1-&gt;4)-beta-D-Glc-(1&lt;-&gt;1)-Cer(d18:1(4E)) + UDP-alpha-D-galactose = a beta-D-Gal-(1-&gt;3)-beta-D-GlcNAc-(1-&gt;3)-beta-D-Gal-(1-&gt;4)-beta-D-Glc-(1&lt;-&gt;1')-Cer(d18:1(4E)) + UDP + H(+)</text>
        <dbReference type="Rhea" id="RHEA:16045"/>
        <dbReference type="ChEBI" id="CHEBI:15378"/>
        <dbReference type="ChEBI" id="CHEBI:17103"/>
        <dbReference type="ChEBI" id="CHEBI:17292"/>
        <dbReference type="ChEBI" id="CHEBI:58223"/>
        <dbReference type="ChEBI" id="CHEBI:66914"/>
        <dbReference type="EC" id="2.4.1.86"/>
    </reaction>
    <physiologicalReaction direction="left-to-right" evidence="2">
        <dbReference type="Rhea" id="RHEA:16046"/>
    </physiologicalReaction>
</comment>
<comment type="cofactor">
    <cofactor evidence="1">
        <name>Mn(2+)</name>
        <dbReference type="ChEBI" id="CHEBI:29035"/>
    </cofactor>
</comment>
<comment type="pathway">
    <text>Protein modification; protein glycosylation.</text>
</comment>
<comment type="subcellular location">
    <subcellularLocation>
        <location evidence="4">Golgi apparatus membrane</location>
        <topology evidence="4">Single-pass type II membrane protein</topology>
    </subcellularLocation>
</comment>
<comment type="similarity">
    <text evidence="4">Belongs to the glycosyltransferase 31 family.</text>
</comment>
<accession>Q9MYM7</accession>
<sequence>MASKVSCLYVLTVVCWASALWYLSITRPTSSYTGSKPFSHLTVARKNFTFGNIRTRPINPHSFEFLINEPNKCEKNIPFLVILISTTHKEFDARQAIRETWGDENNFKGIKIATLFLLGKNADPVLNQMVEQESQIFHDIIVEDFIDSYHNLTLKTLMGMRWVATFCSKAKYVMKTDSDIFVNMDNLIYKLLKPSTKPRRRYFTGYVINGGPIRDVRSKWYMPRDLYPDSNYPPFCSGTGYIFSADVAELIYKTSLHTRLLHLEDVYVGLCLRKLGIHPFQNSGFNHWKMAYSLCRYRRVITVHQISPEEMHRIWNDMSSKKHLRC</sequence>
<protein>
    <recommendedName>
        <fullName>Beta-1,3-galactosyltransferase 1</fullName>
        <shortName>Beta-1,3-GalTase 1</shortName>
        <shortName>Beta3Gal-T1</shortName>
        <shortName>Beta3GalT1</shortName>
        <ecNumber evidence="2">2.4.1.86</ecNumber>
    </recommendedName>
    <alternativeName>
        <fullName>UDP-galactose:beta-N-acetyl-glucosamine-beta-1,3-galactosyltransferase 1</fullName>
    </alternativeName>
</protein>
<proteinExistence type="inferred from homology"/>
<name>B3GT1_PONPY</name>
<organism>
    <name type="scientific">Pongo pygmaeus</name>
    <name type="common">Bornean orangutan</name>
    <dbReference type="NCBI Taxonomy" id="9600"/>
    <lineage>
        <taxon>Eukaryota</taxon>
        <taxon>Metazoa</taxon>
        <taxon>Chordata</taxon>
        <taxon>Craniata</taxon>
        <taxon>Vertebrata</taxon>
        <taxon>Euteleostomi</taxon>
        <taxon>Mammalia</taxon>
        <taxon>Eutheria</taxon>
        <taxon>Euarchontoglires</taxon>
        <taxon>Primates</taxon>
        <taxon>Haplorrhini</taxon>
        <taxon>Catarrhini</taxon>
        <taxon>Hominidae</taxon>
        <taxon>Pongo</taxon>
    </lineage>
</organism>
<dbReference type="EC" id="2.4.1.86" evidence="2"/>
<dbReference type="EMBL" id="AB041411">
    <property type="protein sequence ID" value="BAA94496.1"/>
    <property type="molecule type" value="Genomic_DNA"/>
</dbReference>
<dbReference type="RefSeq" id="XP_054333360.1">
    <property type="nucleotide sequence ID" value="XM_054477385.2"/>
</dbReference>
<dbReference type="RefSeq" id="XP_063504329.1">
    <property type="nucleotide sequence ID" value="XM_063648259.1"/>
</dbReference>
<dbReference type="SMR" id="Q9MYM7"/>
<dbReference type="CAZy" id="GT31">
    <property type="family name" value="Glycosyltransferase Family 31"/>
</dbReference>
<dbReference type="GlyCosmos" id="Q9MYM7">
    <property type="glycosylation" value="2 sites, No reported glycans"/>
</dbReference>
<dbReference type="GeneID" id="129031290"/>
<dbReference type="OrthoDB" id="115198at2759"/>
<dbReference type="UniPathway" id="UPA00378"/>
<dbReference type="GO" id="GO:0000139">
    <property type="term" value="C:Golgi membrane"/>
    <property type="evidence" value="ECO:0007669"/>
    <property type="project" value="UniProtKB-SubCell"/>
</dbReference>
<dbReference type="GO" id="GO:0008499">
    <property type="term" value="F:N-acetyl-beta-D-glucosaminide beta-(1,3)-galactosyltransferase activity"/>
    <property type="evidence" value="ECO:0007669"/>
    <property type="project" value="UniProtKB-EC"/>
</dbReference>
<dbReference type="GO" id="GO:0006629">
    <property type="term" value="P:lipid metabolic process"/>
    <property type="evidence" value="ECO:0007669"/>
    <property type="project" value="UniProtKB-KW"/>
</dbReference>
<dbReference type="GO" id="GO:0006493">
    <property type="term" value="P:protein O-linked glycosylation"/>
    <property type="evidence" value="ECO:0007669"/>
    <property type="project" value="TreeGrafter"/>
</dbReference>
<dbReference type="FunFam" id="3.90.550.50:FF:000001">
    <property type="entry name" value="Hexosyltransferase"/>
    <property type="match status" value="1"/>
</dbReference>
<dbReference type="Gene3D" id="3.90.550.50">
    <property type="match status" value="1"/>
</dbReference>
<dbReference type="InterPro" id="IPR002659">
    <property type="entry name" value="Glyco_trans_31"/>
</dbReference>
<dbReference type="InterPro" id="IPR029044">
    <property type="entry name" value="Nucleotide-diphossugar_trans"/>
</dbReference>
<dbReference type="PANTHER" id="PTHR11214:SF20">
    <property type="entry name" value="BETA-1,3-GALACTOSYLTRANSFERASE 1"/>
    <property type="match status" value="1"/>
</dbReference>
<dbReference type="PANTHER" id="PTHR11214">
    <property type="entry name" value="BETA-1,3-N-ACETYLGLUCOSAMINYLTRANSFERASE"/>
    <property type="match status" value="1"/>
</dbReference>
<dbReference type="Pfam" id="PF01762">
    <property type="entry name" value="Galactosyl_T"/>
    <property type="match status" value="1"/>
</dbReference>
<dbReference type="SUPFAM" id="SSF53448">
    <property type="entry name" value="Nucleotide-diphospho-sugar transferases"/>
    <property type="match status" value="1"/>
</dbReference>
<evidence type="ECO:0000250" key="1"/>
<evidence type="ECO:0000250" key="2">
    <source>
        <dbReference type="UniProtKB" id="Q9Y5Z6"/>
    </source>
</evidence>
<evidence type="ECO:0000255" key="3"/>
<evidence type="ECO:0000305" key="4"/>
<gene>
    <name type="primary">B3GALT1</name>
</gene>
<keyword id="KW-0325">Glycoprotein</keyword>
<keyword id="KW-0328">Glycosyltransferase</keyword>
<keyword id="KW-0333">Golgi apparatus</keyword>
<keyword id="KW-0443">Lipid metabolism</keyword>
<keyword id="KW-0464">Manganese</keyword>
<keyword id="KW-0472">Membrane</keyword>
<keyword id="KW-0735">Signal-anchor</keyword>
<keyword id="KW-0808">Transferase</keyword>
<keyword id="KW-0812">Transmembrane</keyword>
<keyword id="KW-1133">Transmembrane helix</keyword>